<reference key="1">
    <citation type="submission" date="1999-04" db="EMBL/GenBank/DDBJ databases">
        <title>Structural analysis of Arabidopsis thaliana chromosome 5. XI.</title>
        <authorList>
            <person name="Kaneko T."/>
            <person name="Katoh T."/>
            <person name="Asamizu E."/>
            <person name="Sato S."/>
            <person name="Nakamura Y."/>
            <person name="Kotani H."/>
            <person name="Tabata S."/>
        </authorList>
    </citation>
    <scope>NUCLEOTIDE SEQUENCE [LARGE SCALE GENOMIC DNA]</scope>
    <source>
        <strain>cv. Columbia</strain>
    </source>
</reference>
<reference key="2">
    <citation type="journal article" date="2017" name="Plant J.">
        <title>Araport11: a complete reannotation of the Arabidopsis thaliana reference genome.</title>
        <authorList>
            <person name="Cheng C.Y."/>
            <person name="Krishnakumar V."/>
            <person name="Chan A.P."/>
            <person name="Thibaud-Nissen F."/>
            <person name="Schobel S."/>
            <person name="Town C.D."/>
        </authorList>
    </citation>
    <scope>GENOME REANNOTATION</scope>
    <source>
        <strain>cv. Columbia</strain>
    </source>
</reference>
<reference key="3">
    <citation type="journal article" date="2002" name="Science">
        <title>Functional annotation of a full-length Arabidopsis cDNA collection.</title>
        <authorList>
            <person name="Seki M."/>
            <person name="Narusaka M."/>
            <person name="Kamiya A."/>
            <person name="Ishida J."/>
            <person name="Satou M."/>
            <person name="Sakurai T."/>
            <person name="Nakajima M."/>
            <person name="Enju A."/>
            <person name="Akiyama K."/>
            <person name="Oono Y."/>
            <person name="Muramatsu M."/>
            <person name="Hayashizaki Y."/>
            <person name="Kawai J."/>
            <person name="Carninci P."/>
            <person name="Itoh M."/>
            <person name="Ishii Y."/>
            <person name="Arakawa T."/>
            <person name="Shibata K."/>
            <person name="Shinagawa A."/>
            <person name="Shinozaki K."/>
        </authorList>
    </citation>
    <scope>NUCLEOTIDE SEQUENCE [LARGE SCALE MRNA] (ISOFORM 2)</scope>
    <source>
        <strain>cv. Columbia</strain>
    </source>
</reference>
<reference key="4">
    <citation type="journal article" date="2003" name="Science">
        <title>Empirical analysis of transcriptional activity in the Arabidopsis genome.</title>
        <authorList>
            <person name="Yamada K."/>
            <person name="Lim J."/>
            <person name="Dale J.M."/>
            <person name="Chen H."/>
            <person name="Shinn P."/>
            <person name="Palm C.J."/>
            <person name="Southwick A.M."/>
            <person name="Wu H.C."/>
            <person name="Kim C.J."/>
            <person name="Nguyen M."/>
            <person name="Pham P.K."/>
            <person name="Cheuk R.F."/>
            <person name="Karlin-Newmann G."/>
            <person name="Liu S.X."/>
            <person name="Lam B."/>
            <person name="Sakano H."/>
            <person name="Wu T."/>
            <person name="Yu G."/>
            <person name="Miranda M."/>
            <person name="Quach H.L."/>
            <person name="Tripp M."/>
            <person name="Chang C.H."/>
            <person name="Lee J.M."/>
            <person name="Toriumi M.J."/>
            <person name="Chan M.M."/>
            <person name="Tang C.C."/>
            <person name="Onodera C.S."/>
            <person name="Deng J.M."/>
            <person name="Akiyama K."/>
            <person name="Ansari Y."/>
            <person name="Arakawa T."/>
            <person name="Banh J."/>
            <person name="Banno F."/>
            <person name="Bowser L."/>
            <person name="Brooks S.Y."/>
            <person name="Carninci P."/>
            <person name="Chao Q."/>
            <person name="Choy N."/>
            <person name="Enju A."/>
            <person name="Goldsmith A.D."/>
            <person name="Gurjal M."/>
            <person name="Hansen N.F."/>
            <person name="Hayashizaki Y."/>
            <person name="Johnson-Hopson C."/>
            <person name="Hsuan V.W."/>
            <person name="Iida K."/>
            <person name="Karnes M."/>
            <person name="Khan S."/>
            <person name="Koesema E."/>
            <person name="Ishida J."/>
            <person name="Jiang P.X."/>
            <person name="Jones T."/>
            <person name="Kawai J."/>
            <person name="Kamiya A."/>
            <person name="Meyers C."/>
            <person name="Nakajima M."/>
            <person name="Narusaka M."/>
            <person name="Seki M."/>
            <person name="Sakurai T."/>
            <person name="Satou M."/>
            <person name="Tamse R."/>
            <person name="Vaysberg M."/>
            <person name="Wallender E.K."/>
            <person name="Wong C."/>
            <person name="Yamamura Y."/>
            <person name="Yuan S."/>
            <person name="Shinozaki K."/>
            <person name="Davis R.W."/>
            <person name="Theologis A."/>
            <person name="Ecker J.R."/>
        </authorList>
    </citation>
    <scope>NUCLEOTIDE SEQUENCE [LARGE SCALE MRNA] (ISOFORM 2)</scope>
    <source>
        <strain>cv. Columbia</strain>
    </source>
</reference>
<organism>
    <name type="scientific">Arabidopsis thaliana</name>
    <name type="common">Mouse-ear cress</name>
    <dbReference type="NCBI Taxonomy" id="3702"/>
    <lineage>
        <taxon>Eukaryota</taxon>
        <taxon>Viridiplantae</taxon>
        <taxon>Streptophyta</taxon>
        <taxon>Embryophyta</taxon>
        <taxon>Tracheophyta</taxon>
        <taxon>Spermatophyta</taxon>
        <taxon>Magnoliopsida</taxon>
        <taxon>eudicotyledons</taxon>
        <taxon>Gunneridae</taxon>
        <taxon>Pentapetalae</taxon>
        <taxon>rosids</taxon>
        <taxon>malvids</taxon>
        <taxon>Brassicales</taxon>
        <taxon>Brassicaceae</taxon>
        <taxon>Camelineae</taxon>
        <taxon>Arabidopsis</taxon>
    </lineage>
</organism>
<protein>
    <recommendedName>
        <fullName>Mannose-P-dolichol utilization defect 1 protein homolog 1</fullName>
    </recommendedName>
</protein>
<name>MPU11_ARATH</name>
<sequence>MDYLGIDLSCAIGSLRNGEFPAKDCLLPLISKLLGYFLVAASMTVKLPQIMKIVDNKSVKGLSVVAFELEVIGYTISLAYCLNKDLPFSAFGELAFLLIQALILVACIYYFSQPLSVTTWVKAILYFAIAPTVFAGKIDPFLFEALYASKHLIFLSARIPQIWKNFRNKSTGQLSFLTCLMNFGGALARVFTSIQEKAPLSMLLGIVLSIFTNGIIMSQILLYRSKGNEDKLVKSKKIS</sequence>
<keyword id="KW-0025">Alternative splicing</keyword>
<keyword id="KW-0472">Membrane</keyword>
<keyword id="KW-1185">Reference proteome</keyword>
<keyword id="KW-0677">Repeat</keyword>
<keyword id="KW-0812">Transmembrane</keyword>
<keyword id="KW-1133">Transmembrane helix</keyword>
<keyword id="KW-0813">Transport</keyword>
<proteinExistence type="evidence at transcript level"/>
<evidence type="ECO:0000255" key="1"/>
<evidence type="ECO:0000303" key="2">
    <source>
    </source>
</evidence>
<evidence type="ECO:0000303" key="3">
    <source>
    </source>
</evidence>
<evidence type="ECO:0000305" key="4"/>
<accession>Q9LTI3</accession>
<accession>Q8GXW3</accession>
<feature type="chain" id="PRO_0000221038" description="Mannose-P-dolichol utilization defect 1 protein homolog 1">
    <location>
        <begin position="1"/>
        <end position="239"/>
    </location>
</feature>
<feature type="transmembrane region" description="Helical" evidence="1">
    <location>
        <begin position="25"/>
        <end position="45"/>
    </location>
</feature>
<feature type="transmembrane region" description="Helical" evidence="1">
    <location>
        <begin position="62"/>
        <end position="82"/>
    </location>
</feature>
<feature type="transmembrane region" description="Helical" evidence="1">
    <location>
        <begin position="91"/>
        <end position="111"/>
    </location>
</feature>
<feature type="transmembrane region" description="Helical" evidence="1">
    <location>
        <begin position="123"/>
        <end position="143"/>
    </location>
</feature>
<feature type="transmembrane region" description="Helical" evidence="1">
    <location>
        <begin position="174"/>
        <end position="194"/>
    </location>
</feature>
<feature type="transmembrane region" description="Helical" evidence="1">
    <location>
        <begin position="202"/>
        <end position="222"/>
    </location>
</feature>
<feature type="domain" description="PQ-loop 1">
    <location>
        <begin position="27"/>
        <end position="93"/>
    </location>
</feature>
<feature type="domain" description="PQ-loop 2">
    <location>
        <begin position="150"/>
        <end position="205"/>
    </location>
</feature>
<feature type="splice variant" id="VSP_038060" description="In isoform 2." evidence="2 3">
    <original>GKIDPFLFEALYA</original>
    <variation>DLEELQKQKHWTT</variation>
    <location>
        <begin position="136"/>
        <end position="148"/>
    </location>
</feature>
<feature type="splice variant" id="VSP_038061" description="In isoform 2." evidence="2 3">
    <location>
        <begin position="149"/>
        <end position="239"/>
    </location>
</feature>
<dbReference type="EMBL" id="AB025604">
    <property type="protein sequence ID" value="BAA97482.1"/>
    <property type="molecule type" value="Genomic_DNA"/>
</dbReference>
<dbReference type="EMBL" id="CP002688">
    <property type="protein sequence ID" value="AED97193.1"/>
    <property type="molecule type" value="Genomic_DNA"/>
</dbReference>
<dbReference type="EMBL" id="CP002688">
    <property type="protein sequence ID" value="AED97194.1"/>
    <property type="molecule type" value="Genomic_DNA"/>
</dbReference>
<dbReference type="EMBL" id="AK118007">
    <property type="protein sequence ID" value="BAC42640.1"/>
    <property type="molecule type" value="mRNA"/>
</dbReference>
<dbReference type="EMBL" id="BT003664">
    <property type="protein sequence ID" value="AAO39892.1"/>
    <property type="molecule type" value="mRNA"/>
</dbReference>
<dbReference type="RefSeq" id="NP_001190569.1">
    <molecule id="Q9LTI3-2"/>
    <property type="nucleotide sequence ID" value="NM_001203640.2"/>
</dbReference>
<dbReference type="RefSeq" id="NP_200755.1">
    <molecule id="Q9LTI3-1"/>
    <property type="nucleotide sequence ID" value="NM_125338.3"/>
</dbReference>
<dbReference type="SMR" id="Q9LTI3"/>
<dbReference type="FunCoup" id="Q9LTI3">
    <property type="interactions" value="3253"/>
</dbReference>
<dbReference type="STRING" id="3702.Q9LTI3"/>
<dbReference type="PaxDb" id="3702-AT5G59470.1"/>
<dbReference type="ProteomicsDB" id="250850">
    <molecule id="Q9LTI3-1"/>
</dbReference>
<dbReference type="EnsemblPlants" id="AT5G59470.1">
    <molecule id="Q9LTI3-1"/>
    <property type="protein sequence ID" value="AT5G59470.1"/>
    <property type="gene ID" value="AT5G59470"/>
</dbReference>
<dbReference type="EnsemblPlants" id="AT5G59470.2">
    <molecule id="Q9LTI3-2"/>
    <property type="protein sequence ID" value="AT5G59470.2"/>
    <property type="gene ID" value="AT5G59470"/>
</dbReference>
<dbReference type="GeneID" id="836066"/>
<dbReference type="Gramene" id="AT5G59470.1">
    <molecule id="Q9LTI3-1"/>
    <property type="protein sequence ID" value="AT5G59470.1"/>
    <property type="gene ID" value="AT5G59470"/>
</dbReference>
<dbReference type="Gramene" id="AT5G59470.2">
    <molecule id="Q9LTI3-2"/>
    <property type="protein sequence ID" value="AT5G59470.2"/>
    <property type="gene ID" value="AT5G59470"/>
</dbReference>
<dbReference type="KEGG" id="ath:AT5G59470"/>
<dbReference type="Araport" id="AT5G59470"/>
<dbReference type="TAIR" id="AT5G59470"/>
<dbReference type="eggNOG" id="KOG3211">
    <property type="taxonomic scope" value="Eukaryota"/>
</dbReference>
<dbReference type="HOGENOM" id="CLU_053568_1_1_1"/>
<dbReference type="InParanoid" id="Q9LTI3"/>
<dbReference type="OMA" id="NAQTNDH"/>
<dbReference type="OrthoDB" id="271506at2759"/>
<dbReference type="PhylomeDB" id="Q9LTI3"/>
<dbReference type="PRO" id="PR:Q9LTI3"/>
<dbReference type="Proteomes" id="UP000006548">
    <property type="component" value="Chromosome 5"/>
</dbReference>
<dbReference type="ExpressionAtlas" id="Q9LTI3">
    <property type="expression patterns" value="baseline and differential"/>
</dbReference>
<dbReference type="GO" id="GO:0016020">
    <property type="term" value="C:membrane"/>
    <property type="evidence" value="ECO:0007669"/>
    <property type="project" value="UniProtKB-SubCell"/>
</dbReference>
<dbReference type="Gene3D" id="1.20.1280.290">
    <property type="match status" value="2"/>
</dbReference>
<dbReference type="InterPro" id="IPR016817">
    <property type="entry name" value="MannP-dilichol_defect-1"/>
</dbReference>
<dbReference type="InterPro" id="IPR006603">
    <property type="entry name" value="PQ-loop_rpt"/>
</dbReference>
<dbReference type="PANTHER" id="PTHR12226">
    <property type="entry name" value="MANNOSE-P-DOLICHOL UTILIZATION DEFECT 1 LEC35 -RELATED"/>
    <property type="match status" value="1"/>
</dbReference>
<dbReference type="PANTHER" id="PTHR12226:SF4">
    <property type="entry name" value="MANNOSE-P-DOLICHOL UTILIZATION DEFECT 1 PROTEIN HOMOLOG 1"/>
    <property type="match status" value="1"/>
</dbReference>
<dbReference type="Pfam" id="PF04193">
    <property type="entry name" value="PQ-loop"/>
    <property type="match status" value="2"/>
</dbReference>
<dbReference type="PIRSF" id="PIRSF023381">
    <property type="entry name" value="MannP-dilichol_defect-1p"/>
    <property type="match status" value="1"/>
</dbReference>
<dbReference type="SMART" id="SM00679">
    <property type="entry name" value="CTNS"/>
    <property type="match status" value="2"/>
</dbReference>
<comment type="subcellular location">
    <subcellularLocation>
        <location evidence="4">Membrane</location>
        <topology evidence="4">Multi-pass membrane protein</topology>
    </subcellularLocation>
</comment>
<comment type="alternative products">
    <event type="alternative splicing"/>
    <isoform>
        <id>Q9LTI3-1</id>
        <name>1</name>
        <sequence type="displayed"/>
    </isoform>
    <isoform>
        <id>Q9LTI3-2</id>
        <name>2</name>
        <sequence type="described" ref="VSP_038060 VSP_038061"/>
    </isoform>
</comment>
<comment type="similarity">
    <text evidence="4">Belongs to the MPDU1 (TC 2.A.43.3) family.</text>
</comment>
<gene>
    <name type="ordered locus">At5g59470</name>
    <name type="ORF">F2O15.15</name>
    <name type="ORF">F2O15_130</name>
</gene>